<organism>
    <name type="scientific">Caenorhabditis elegans</name>
    <dbReference type="NCBI Taxonomy" id="6239"/>
    <lineage>
        <taxon>Eukaryota</taxon>
        <taxon>Metazoa</taxon>
        <taxon>Ecdysozoa</taxon>
        <taxon>Nematoda</taxon>
        <taxon>Chromadorea</taxon>
        <taxon>Rhabditida</taxon>
        <taxon>Rhabditina</taxon>
        <taxon>Rhabditomorpha</taxon>
        <taxon>Rhabditoidea</taxon>
        <taxon>Rhabditidae</taxon>
        <taxon>Peloderinae</taxon>
        <taxon>Caenorhabditis</taxon>
    </lineage>
</organism>
<keyword id="KW-0145">Chemotaxis</keyword>
<keyword id="KW-0217">Developmental protein</keyword>
<keyword id="KW-0221">Differentiation</keyword>
<keyword id="KW-0238">DNA-binding</keyword>
<keyword id="KW-0371">Homeobox</keyword>
<keyword id="KW-0539">Nucleus</keyword>
<keyword id="KW-1185">Reference proteome</keyword>
<gene>
    <name evidence="9" type="primary">ceh-36</name>
    <name evidence="9" type="ORF">C37E2.4</name>
</gene>
<proteinExistence type="evidence at protein level"/>
<protein>
    <recommendedName>
        <fullName>Homeobox protein ceh-36</fullName>
    </recommendedName>
</protein>
<accession>Q93352</accession>
<reference key="1">
    <citation type="journal article" date="1998" name="Science">
        <title>Genome sequence of the nematode C. elegans: a platform for investigating biology.</title>
        <authorList>
            <consortium name="The C. elegans sequencing consortium"/>
        </authorList>
    </citation>
    <scope>NUCLEOTIDE SEQUENCE [LARGE SCALE GENOMIC DNA]</scope>
    <source>
        <strain>Bristol N2</strain>
    </source>
</reference>
<reference key="2">
    <citation type="journal article" date="2003" name="Dev. Cell">
        <title>Otx/otd homeobox genes specify distinct sensory neuron identities in C. elegans.</title>
        <authorList>
            <person name="Lanjuin A."/>
            <person name="VanHoven M.K."/>
            <person name="Bargmann C.I."/>
            <person name="Thompson J.K."/>
            <person name="Sengupta P."/>
        </authorList>
    </citation>
    <scope>FUNCTION</scope>
    <scope>TISSUE SPECIFICITY</scope>
    <scope>MUTAGENESIS OF 210-GLN--LEU-257</scope>
</reference>
<reference key="3">
    <citation type="journal article" date="2004" name="J. Mol. Biol.">
        <title>The C. elegans ceh-36 gene encodes a putative homeodomain transcription factor involved in chemosensory functions of ASE and AWC neurons.</title>
        <authorList>
            <person name="Koga M."/>
            <person name="Ohshima Y."/>
        </authorList>
    </citation>
    <scope>FUNCTION</scope>
    <scope>TISSUE SPECIFICITY</scope>
    <scope>MUTAGENESIS OF PRO-80</scope>
</reference>
<reference key="4">
    <citation type="journal article" date="2010" name="Development">
        <title>Otx-dependent expression of proneural bHLH genes establishes a neuronal bilateral asymmetry in C. elegans.</title>
        <authorList>
            <person name="Nakano S."/>
            <person name="Ellis R.E."/>
            <person name="Horvitz H.R."/>
        </authorList>
    </citation>
    <scope>FUNCTION</scope>
    <scope>TISSUE SPECIFICITY</scope>
</reference>
<reference key="5">
    <citation type="journal article" date="2015" name="EMBO J.">
        <title>Postmitotic diversification of olfactory neuron types is mediated by differential activities of the HMG-box transcription factor SOX-2.</title>
        <authorList>
            <person name="Alqadah A."/>
            <person name="Hsieh Y.W."/>
            <person name="Vidal B."/>
            <person name="Chang C."/>
            <person name="Hobert O."/>
            <person name="Chuang C.F."/>
        </authorList>
    </citation>
    <scope>FUNCTION</scope>
    <scope>INTERACTION WITH SOX-2</scope>
</reference>
<reference key="6">
    <citation type="journal article" date="2015" name="PLoS Genet.">
        <title>The Bicoid class homeodomain factors ceh-36/OTX and unc-30/PITX cooperate in C. elegans embryonic progenitor cells to regulate robust development.</title>
        <authorList>
            <person name="Walton T."/>
            <person name="Preston E."/>
            <person name="Nair G."/>
            <person name="Zacharias A.L."/>
            <person name="Raj A."/>
            <person name="Murray J.I."/>
        </authorList>
    </citation>
    <scope>FUNCTION</scope>
    <scope>DEVELOPMENTAL STAGE</scope>
    <scope>MUTAGENESIS OF 66-GLN--LEU-257; 210-GLN--LEU-257 AND PRO-80</scope>
</reference>
<sequence length="257" mass="28581">MTTNFYTAFPTLGYTAYPQFAFAAATTAPSLTSATTSSTTMAPMAPNSESGRRAGRRERTSFNRGQLDQLEKVFRETQYPDVHRREALAKAINLPDGRVQVITVWFKNRRAKDRNNKKMDGVHPGSTSSRSSNGSPHNESKPDTKSLGIHIPGTPEFNAHSAAKYEANSAVLSQLQQQQQQQLQQPKSELEDSKPLADTKYDSTQSLLPQAQAAAYASYATTAPYPYNYNSYFPSNFYYQQYGSNDYTPNITAYSPL</sequence>
<evidence type="ECO:0000255" key="1">
    <source>
        <dbReference type="PROSITE-ProRule" id="PRU00108"/>
    </source>
</evidence>
<evidence type="ECO:0000256" key="2">
    <source>
        <dbReference type="SAM" id="MobiDB-lite"/>
    </source>
</evidence>
<evidence type="ECO:0000269" key="3">
    <source>
    </source>
</evidence>
<evidence type="ECO:0000269" key="4">
    <source>
    </source>
</evidence>
<evidence type="ECO:0000269" key="5">
    <source>
    </source>
</evidence>
<evidence type="ECO:0000269" key="6">
    <source>
    </source>
</evidence>
<evidence type="ECO:0000269" key="7">
    <source>
    </source>
</evidence>
<evidence type="ECO:0000305" key="8"/>
<evidence type="ECO:0000312" key="9">
    <source>
        <dbReference type="WormBase" id="C37E2.4"/>
    </source>
</evidence>
<name>HM36_CAEEL</name>
<comment type="function">
    <text evidence="3 4 5 6 7">Probable transcription factor, acting as a progenitor identity factor regulating the development of lineally-related embryonic cells including glial, excretory and neuronal cells (PubMed:21041366, PubMed:25738873). Mediates chemosensory function of ASE and AWC neurons (PubMed:14536063, PubMed:15095973). In ASE neurons, required to diversify the fate of the ASEL neurons from the ASER neurons (PubMed:14536063, PubMed:15095973). Acts cell-autonomously to establish a neuronal left right asymmetry, possibly promoting asymmetric expression of the helix-loop-helix proteins ngn-1 and hlh-2 (PubMed:21041366). In cooperation with the transcription factor sox-2, required for the differentiation of AWC olfactory neurons (PubMed:15095973, PubMed:26341465). May regulate the expression of sox-2 in AWC olfactory neurons (PubMed:26341465).</text>
</comment>
<comment type="subunit">
    <text evidence="7">Interacts with sox-2.</text>
</comment>
<comment type="subcellular location">
    <subcellularLocation>
        <location evidence="8">Nucleus</location>
    </subcellularLocation>
</comment>
<comment type="tissue specificity">
    <text evidence="3 4 5">Expressed in ASE and AWC chemosensory neurons (PubMed:14536063, PubMed:15095973). Expressed left-right asymmetrically in the embryo, in the grandmother cell and the mother cell to the MI pharyngeal motorneuron but in neither analogous precursors of the e3D neuron (PubMed:21041366).</text>
</comment>
<comment type="developmental stage">
    <text evidence="6">Up to the comma stage, expressed in six lineages that produce diverse cell types including pharyngeal cells, muscles, neurons and glia.</text>
</comment>
<comment type="similarity">
    <text evidence="8">Belongs to the paired homeobox family.</text>
</comment>
<dbReference type="EMBL" id="BX284606">
    <property type="protein sequence ID" value="CAB02821.1"/>
    <property type="molecule type" value="Genomic_DNA"/>
</dbReference>
<dbReference type="PIR" id="T19809">
    <property type="entry name" value="T19809"/>
</dbReference>
<dbReference type="RefSeq" id="NP_510365.1">
    <property type="nucleotide sequence ID" value="NM_077964.5"/>
</dbReference>
<dbReference type="SMR" id="Q93352"/>
<dbReference type="BioGRID" id="46428">
    <property type="interactions" value="3"/>
</dbReference>
<dbReference type="FunCoup" id="Q93352">
    <property type="interactions" value="138"/>
</dbReference>
<dbReference type="IntAct" id="Q93352">
    <property type="interactions" value="3"/>
</dbReference>
<dbReference type="STRING" id="6239.C37E2.4.1"/>
<dbReference type="PaxDb" id="6239-C37E2.4"/>
<dbReference type="EnsemblMetazoa" id="C37E2.4.1">
    <property type="protein sequence ID" value="C37E2.4.1"/>
    <property type="gene ID" value="WBGene00000457"/>
</dbReference>
<dbReference type="GeneID" id="181529"/>
<dbReference type="KEGG" id="cel:CELE_C37E2.4"/>
<dbReference type="UCSC" id="C37E2.4">
    <property type="organism name" value="c. elegans"/>
</dbReference>
<dbReference type="AGR" id="WB:WBGene00000457"/>
<dbReference type="CTD" id="181529"/>
<dbReference type="WormBase" id="C37E2.4">
    <property type="protein sequence ID" value="CE08623"/>
    <property type="gene ID" value="WBGene00000457"/>
    <property type="gene designation" value="ceh-36"/>
</dbReference>
<dbReference type="eggNOG" id="KOG2251">
    <property type="taxonomic scope" value="Eukaryota"/>
</dbReference>
<dbReference type="GeneTree" id="ENSGT00940000167436"/>
<dbReference type="HOGENOM" id="CLU_991234_0_0_1"/>
<dbReference type="InParanoid" id="Q93352"/>
<dbReference type="OMA" id="VQVITVW"/>
<dbReference type="OrthoDB" id="6159439at2759"/>
<dbReference type="SignaLink" id="Q93352"/>
<dbReference type="PRO" id="PR:Q93352"/>
<dbReference type="Proteomes" id="UP000001940">
    <property type="component" value="Chromosome X"/>
</dbReference>
<dbReference type="Bgee" id="WBGene00000457">
    <property type="expression patterns" value="Expressed in embryo and 3 other cell types or tissues"/>
</dbReference>
<dbReference type="GO" id="GO:0005634">
    <property type="term" value="C:nucleus"/>
    <property type="evidence" value="ECO:0000314"/>
    <property type="project" value="WormBase"/>
</dbReference>
<dbReference type="GO" id="GO:0000981">
    <property type="term" value="F:DNA-binding transcription factor activity, RNA polymerase II-specific"/>
    <property type="evidence" value="ECO:0000318"/>
    <property type="project" value="GO_Central"/>
</dbReference>
<dbReference type="GO" id="GO:0000978">
    <property type="term" value="F:RNA polymerase II cis-regulatory region sequence-specific DNA binding"/>
    <property type="evidence" value="ECO:0000318"/>
    <property type="project" value="GO_Central"/>
</dbReference>
<dbReference type="GO" id="GO:0000977">
    <property type="term" value="F:RNA polymerase II transcription regulatory region sequence-specific DNA binding"/>
    <property type="evidence" value="ECO:0000314"/>
    <property type="project" value="WormBase"/>
</dbReference>
<dbReference type="GO" id="GO:0006935">
    <property type="term" value="P:chemotaxis"/>
    <property type="evidence" value="ECO:0007669"/>
    <property type="project" value="UniProtKB-KW"/>
</dbReference>
<dbReference type="GO" id="GO:0048665">
    <property type="term" value="P:neuron fate specification"/>
    <property type="evidence" value="ECO:0000315"/>
    <property type="project" value="UniProtKB"/>
</dbReference>
<dbReference type="GO" id="GO:0045944">
    <property type="term" value="P:positive regulation of transcription by RNA polymerase II"/>
    <property type="evidence" value="ECO:0000315"/>
    <property type="project" value="WormBase"/>
</dbReference>
<dbReference type="GO" id="GO:0006357">
    <property type="term" value="P:regulation of transcription by RNA polymerase II"/>
    <property type="evidence" value="ECO:0000318"/>
    <property type="project" value="GO_Central"/>
</dbReference>
<dbReference type="GO" id="GO:0007606">
    <property type="term" value="P:sensory perception of chemical stimulus"/>
    <property type="evidence" value="ECO:0000315"/>
    <property type="project" value="UniProtKB"/>
</dbReference>
<dbReference type="CDD" id="cd00086">
    <property type="entry name" value="homeodomain"/>
    <property type="match status" value="1"/>
</dbReference>
<dbReference type="FunFam" id="1.10.10.60:FF:000214">
    <property type="entry name" value="Homeobox expressed in ES cells 1"/>
    <property type="match status" value="1"/>
</dbReference>
<dbReference type="Gene3D" id="1.10.10.60">
    <property type="entry name" value="Homeodomain-like"/>
    <property type="match status" value="1"/>
</dbReference>
<dbReference type="InterPro" id="IPR001356">
    <property type="entry name" value="HD"/>
</dbReference>
<dbReference type="InterPro" id="IPR009057">
    <property type="entry name" value="Homeodomain-like_sf"/>
</dbReference>
<dbReference type="PANTHER" id="PTHR45793">
    <property type="entry name" value="HOMEOBOX PROTEIN"/>
    <property type="match status" value="1"/>
</dbReference>
<dbReference type="PANTHER" id="PTHR45793:SF25">
    <property type="entry name" value="HOMEOBOX PROTEIN CEH-36"/>
    <property type="match status" value="1"/>
</dbReference>
<dbReference type="Pfam" id="PF00046">
    <property type="entry name" value="Homeodomain"/>
    <property type="match status" value="1"/>
</dbReference>
<dbReference type="SMART" id="SM00389">
    <property type="entry name" value="HOX"/>
    <property type="match status" value="1"/>
</dbReference>
<dbReference type="SUPFAM" id="SSF46689">
    <property type="entry name" value="Homeodomain-like"/>
    <property type="match status" value="1"/>
</dbReference>
<dbReference type="PROSITE" id="PS50071">
    <property type="entry name" value="HOMEOBOX_2"/>
    <property type="match status" value="1"/>
</dbReference>
<feature type="chain" id="PRO_0000049001" description="Homeobox protein ceh-36">
    <location>
        <begin position="1"/>
        <end position="257"/>
    </location>
</feature>
<feature type="DNA-binding region" description="Homeobox" evidence="1">
    <location>
        <begin position="55"/>
        <end position="117"/>
    </location>
</feature>
<feature type="region of interest" description="Disordered" evidence="2">
    <location>
        <begin position="33"/>
        <end position="63"/>
    </location>
</feature>
<feature type="region of interest" description="Disordered" evidence="2">
    <location>
        <begin position="113"/>
        <end position="156"/>
    </location>
</feature>
<feature type="compositionally biased region" description="Low complexity" evidence="2">
    <location>
        <begin position="33"/>
        <end position="49"/>
    </location>
</feature>
<feature type="compositionally biased region" description="Low complexity" evidence="2">
    <location>
        <begin position="123"/>
        <end position="137"/>
    </location>
</feature>
<feature type="mutagenesis site" description="In ky646; many cells in embryos have defects in both cell cycle timing and cell position, or fail to undergo programmed cell death when expected. About 10% lethality of embryos and 59% reach larval stage 4 (L4) by 6 days." evidence="6">
    <location>
        <begin position="66"/>
        <end position="257"/>
    </location>
</feature>
<feature type="mutagenesis site" description="In ks86; defective chemotaxis response to sodium acetate and reduced expression of tax-2. About 55% of animals arrest as larvae." evidence="4 6">
    <original>P</original>
    <variation>S</variation>
    <location>
        <position position="80"/>
    </location>
</feature>
<feature type="mutagenesis site" description="In ky640; about 1% lethality of embryos and 78% reach larval stage 4 (L4) by 6 days. Expression of the transcription factor mls-2 is abolished after the L1 stage in the AWC neurons." evidence="3 6">
    <location>
        <begin position="210"/>
        <end position="257"/>
    </location>
</feature>